<protein>
    <recommendedName>
        <fullName>Apolipoprotein C-II</fullName>
        <shortName>Apo-CII</shortName>
        <shortName>ApoC-II</shortName>
    </recommendedName>
    <alternativeName>
        <fullName>Apolipoprotein C2</fullName>
    </alternativeName>
    <component>
        <recommendedName>
            <fullName>Proapolipoprotein C-II</fullName>
            <shortName>ProapoC-II</shortName>
        </recommendedName>
    </component>
</protein>
<keyword id="KW-0162">Chylomicron</keyword>
<keyword id="KW-0325">Glycoprotein</keyword>
<keyword id="KW-0345">HDL</keyword>
<keyword id="KW-0427">LDL</keyword>
<keyword id="KW-0442">Lipid degradation</keyword>
<keyword id="KW-0443">Lipid metabolism</keyword>
<keyword id="KW-0445">Lipid transport</keyword>
<keyword id="KW-0964">Secreted</keyword>
<keyword id="KW-0730">Sialic acid</keyword>
<keyword id="KW-0732">Signal</keyword>
<keyword id="KW-0813">Transport</keyword>
<keyword id="KW-0850">VLDL</keyword>
<comment type="function">
    <text evidence="1">Component of chylomicrons, very low-density lipoproteins (VLDL), low-density lipoproteins (LDL), and high-density lipoproteins (HDL) in plasma. Plays an important role in lipoprotein metabolism as an activator of lipoprotein lipase. Both proapolipoprotein C-II and apolipoprotein C-II can activate lipoprotein lipase.</text>
</comment>
<comment type="subcellular location">
    <subcellularLocation>
        <location evidence="1">Secreted</location>
    </subcellularLocation>
</comment>
<comment type="PTM">
    <text evidence="1">Proapolipoprotein C-II is synthesized as a sialic acid containing glycoprotein which is subsequently desialylated prior to its proteolytic processing.</text>
</comment>
<comment type="PTM">
    <text evidence="1">Proapolipoprotein C-II, the major form found in plasma undergoes proteolytic cleavage of its N-terminal hexapeptide to generate apolipoprotein C-II, which occurs as the minor form in plasma.</text>
</comment>
<comment type="similarity">
    <text evidence="3">Belongs to the apolipoprotein C2 family.</text>
</comment>
<organism>
    <name type="scientific">Tapirus terrestris</name>
    <name type="common">Lowland tapir</name>
    <name type="synonym">Brazilian tapir</name>
    <dbReference type="NCBI Taxonomy" id="9801"/>
    <lineage>
        <taxon>Eukaryota</taxon>
        <taxon>Metazoa</taxon>
        <taxon>Chordata</taxon>
        <taxon>Craniata</taxon>
        <taxon>Vertebrata</taxon>
        <taxon>Euteleostomi</taxon>
        <taxon>Mammalia</taxon>
        <taxon>Eutheria</taxon>
        <taxon>Laurasiatheria</taxon>
        <taxon>Perissodactyla</taxon>
        <taxon>Tapiridae</taxon>
        <taxon>Tapirus</taxon>
    </lineage>
</organism>
<reference key="1">
    <citation type="submission" date="2018-02" db="EMBL/GenBank/DDBJ databases">
        <title>The 200 mammals project: sequencing genomes by a novel cost-effective method, yielding a high resolution annotation of the human genome.</title>
        <authorList>
            <person name="Johnson J."/>
            <person name="Muren E."/>
            <person name="Swofford R."/>
            <person name="Turner-Maier J."/>
            <person name="Marinescu V.D."/>
            <person name="Genereux D.P."/>
            <person name="Alfoldi J."/>
            <person name="Birren B."/>
            <person name="Karlsson E.K."/>
            <person name="Lindblad-Toh K."/>
        </authorList>
    </citation>
    <scope>NUCLEOTIDE SEQUENCE [LARGE SCALE GENOMIC DNA]</scope>
</reference>
<reference key="2">
    <citation type="unpublished observations" date="2021-03">
        <authorList>
            <person name="Puppione D.L."/>
        </authorList>
    </citation>
    <scope>IDENTIFICATION</scope>
</reference>
<sequence length="101" mass="11172">MGARHLLALLLVLLVLGFEVQGAQVPQQDEAANTTLLTQVQESLLSYWDSTKAAAQDLYKKTYLTTMDEKIRDMFSKSTAAVSTYVGIFTDQLLSLLKGED</sequence>
<gene>
    <name type="primary">APOC2</name>
</gene>
<feature type="signal peptide" evidence="2">
    <location>
        <begin position="1"/>
        <end position="22"/>
    </location>
</feature>
<feature type="chain" id="PRO_0000452906" description="Proapolipoprotein C-II">
    <location>
        <begin position="23"/>
        <end position="101"/>
    </location>
</feature>
<feature type="chain" id="PRO_0000452907" description="Apolipoprotein C-II" evidence="1">
    <location>
        <begin position="29"/>
        <end position="101"/>
    </location>
</feature>
<feature type="region of interest" description="Lipid binding" evidence="1">
    <location>
        <begin position="66"/>
        <end position="74"/>
    </location>
</feature>
<feature type="region of interest" description="Lipoprotein lipase cofactor" evidence="1">
    <location>
        <begin position="78"/>
        <end position="101"/>
    </location>
</feature>
<name>APOC2_TAPTE</name>
<dbReference type="EMBL" id="PVID01016054">
    <property type="status" value="NOT_ANNOTATED_CDS"/>
    <property type="molecule type" value="Genomic_DNA"/>
</dbReference>
<dbReference type="SMR" id="P0DUP4"/>
<dbReference type="GO" id="GO:0042627">
    <property type="term" value="C:chylomicron"/>
    <property type="evidence" value="ECO:0007669"/>
    <property type="project" value="UniProtKB-KW"/>
</dbReference>
<dbReference type="GO" id="GO:0034364">
    <property type="term" value="C:high-density lipoprotein particle"/>
    <property type="evidence" value="ECO:0007669"/>
    <property type="project" value="UniProtKB-KW"/>
</dbReference>
<dbReference type="GO" id="GO:0034362">
    <property type="term" value="C:low-density lipoprotein particle"/>
    <property type="evidence" value="ECO:0007669"/>
    <property type="project" value="UniProtKB-KW"/>
</dbReference>
<dbReference type="GO" id="GO:0034361">
    <property type="term" value="C:very-low-density lipoprotein particle"/>
    <property type="evidence" value="ECO:0007669"/>
    <property type="project" value="UniProtKB-KW"/>
</dbReference>
<dbReference type="GO" id="GO:0016004">
    <property type="term" value="F:phospholipase activator activity"/>
    <property type="evidence" value="ECO:0007669"/>
    <property type="project" value="TreeGrafter"/>
</dbReference>
<dbReference type="GO" id="GO:0043274">
    <property type="term" value="F:phospholipase binding"/>
    <property type="evidence" value="ECO:0007669"/>
    <property type="project" value="TreeGrafter"/>
</dbReference>
<dbReference type="GO" id="GO:0016042">
    <property type="term" value="P:lipid catabolic process"/>
    <property type="evidence" value="ECO:0007669"/>
    <property type="project" value="UniProtKB-KW"/>
</dbReference>
<dbReference type="GO" id="GO:0006869">
    <property type="term" value="P:lipid transport"/>
    <property type="evidence" value="ECO:0007669"/>
    <property type="project" value="UniProtKB-KW"/>
</dbReference>
<dbReference type="GO" id="GO:0060697">
    <property type="term" value="P:positive regulation of phospholipid catabolic process"/>
    <property type="evidence" value="ECO:0007669"/>
    <property type="project" value="TreeGrafter"/>
</dbReference>
<dbReference type="FunFam" id="1.10.1440.10:FF:000001">
    <property type="entry name" value="Apolipoprotein C-II"/>
    <property type="match status" value="1"/>
</dbReference>
<dbReference type="Gene3D" id="1.10.1440.10">
    <property type="entry name" value="Apolipoprotein C-II"/>
    <property type="match status" value="1"/>
</dbReference>
<dbReference type="InterPro" id="IPR008019">
    <property type="entry name" value="Apo-CII"/>
</dbReference>
<dbReference type="InterPro" id="IPR023121">
    <property type="entry name" value="ApoC-II_dom_sf"/>
</dbReference>
<dbReference type="PANTHER" id="PTHR16566">
    <property type="entry name" value="APOLIPOPROTEIN C-II"/>
    <property type="match status" value="1"/>
</dbReference>
<dbReference type="PANTHER" id="PTHR16566:SF0">
    <property type="entry name" value="APOLIPOPROTEIN C-II"/>
    <property type="match status" value="1"/>
</dbReference>
<dbReference type="Pfam" id="PF05355">
    <property type="entry name" value="Apo-CII"/>
    <property type="match status" value="1"/>
</dbReference>
<proteinExistence type="inferred from homology"/>
<evidence type="ECO:0000250" key="1">
    <source>
        <dbReference type="UniProtKB" id="P02655"/>
    </source>
</evidence>
<evidence type="ECO:0000250" key="2">
    <source>
        <dbReference type="UniProtKB" id="P18658"/>
    </source>
</evidence>
<evidence type="ECO:0000305" key="3"/>
<accession>P0DUP4</accession>